<proteinExistence type="inferred from homology"/>
<name>B2MG_SIGHI</name>
<gene>
    <name type="primary">B2M</name>
</gene>
<sequence length="119" mass="13831">MARTVATFFLMLVSLACLDAIERPPQVQVYTRHPPENGKTNFLNCYVSQFHPPHIEIELLKNGKKIEKVEMSDLSFSKDWTFYLLAHTEFTPTANDKYACRVSHVTLKEPKVVTWERDM</sequence>
<feature type="signal peptide" evidence="1">
    <location>
        <begin position="1"/>
        <end position="20"/>
    </location>
</feature>
<feature type="chain" id="PRO_0000018802" description="Beta-2-microglobulin">
    <location>
        <begin position="21"/>
        <end position="119"/>
    </location>
</feature>
<feature type="domain" description="Ig-like C1-type">
    <location>
        <begin position="25"/>
        <end position="114"/>
    </location>
</feature>
<feature type="disulfide bond" evidence="2">
    <location>
        <begin position="45"/>
        <end position="100"/>
    </location>
</feature>
<accession>Q8CIQ3</accession>
<keyword id="KW-1015">Disulfide bond</keyword>
<keyword id="KW-0391">Immunity</keyword>
<keyword id="KW-0393">Immunoglobulin domain</keyword>
<keyword id="KW-0490">MHC I</keyword>
<keyword id="KW-0964">Secreted</keyword>
<keyword id="KW-0732">Signal</keyword>
<comment type="function">
    <text evidence="1">Component of the class I major histocompatibility complex (MHC). Involved in the presentation of peptide antigens to the immune system (By similarity).</text>
</comment>
<comment type="subunit">
    <text evidence="1">Heterodimer of an alpha chain and a beta chain. Beta-2-microglobulin is the beta-chain of major histocompatibility complex class I molecules (By similarity).</text>
</comment>
<comment type="subcellular location">
    <subcellularLocation>
        <location evidence="1">Secreted</location>
    </subcellularLocation>
</comment>
<comment type="similarity">
    <text evidence="3">Belongs to the beta-2-microglobulin family.</text>
</comment>
<dbReference type="EMBL" id="AY147016">
    <property type="protein sequence ID" value="AAN61170.1"/>
    <property type="molecule type" value="mRNA"/>
</dbReference>
<dbReference type="SMR" id="Q8CIQ3"/>
<dbReference type="OrthoDB" id="9949628at2759"/>
<dbReference type="GO" id="GO:0005576">
    <property type="term" value="C:extracellular region"/>
    <property type="evidence" value="ECO:0007669"/>
    <property type="project" value="UniProtKB-SubCell"/>
</dbReference>
<dbReference type="GO" id="GO:0042612">
    <property type="term" value="C:MHC class I protein complex"/>
    <property type="evidence" value="ECO:0007669"/>
    <property type="project" value="UniProtKB-KW"/>
</dbReference>
<dbReference type="GO" id="GO:0002474">
    <property type="term" value="P:antigen processing and presentation of peptide antigen via MHC class I"/>
    <property type="evidence" value="ECO:0007669"/>
    <property type="project" value="UniProtKB-KW"/>
</dbReference>
<dbReference type="GO" id="GO:0006955">
    <property type="term" value="P:immune response"/>
    <property type="evidence" value="ECO:0007669"/>
    <property type="project" value="InterPro"/>
</dbReference>
<dbReference type="CDD" id="cd05770">
    <property type="entry name" value="IgC1_beta2m"/>
    <property type="match status" value="1"/>
</dbReference>
<dbReference type="FunFam" id="2.60.40.10:FF:001005">
    <property type="entry name" value="Beta-2-microglobulin"/>
    <property type="match status" value="1"/>
</dbReference>
<dbReference type="Gene3D" id="2.60.40.10">
    <property type="entry name" value="Immunoglobulins"/>
    <property type="match status" value="1"/>
</dbReference>
<dbReference type="InterPro" id="IPR015707">
    <property type="entry name" value="B2Microglobulin"/>
</dbReference>
<dbReference type="InterPro" id="IPR007110">
    <property type="entry name" value="Ig-like_dom"/>
</dbReference>
<dbReference type="InterPro" id="IPR036179">
    <property type="entry name" value="Ig-like_dom_sf"/>
</dbReference>
<dbReference type="InterPro" id="IPR013783">
    <property type="entry name" value="Ig-like_fold"/>
</dbReference>
<dbReference type="InterPro" id="IPR003006">
    <property type="entry name" value="Ig/MHC_CS"/>
</dbReference>
<dbReference type="InterPro" id="IPR003597">
    <property type="entry name" value="Ig_C1-set"/>
</dbReference>
<dbReference type="InterPro" id="IPR050160">
    <property type="entry name" value="MHC/Immunoglobulin"/>
</dbReference>
<dbReference type="PANTHER" id="PTHR19944:SF62">
    <property type="entry name" value="BETA-2-MICROGLOBULIN"/>
    <property type="match status" value="1"/>
</dbReference>
<dbReference type="PANTHER" id="PTHR19944">
    <property type="entry name" value="MHC CLASS II-RELATED"/>
    <property type="match status" value="1"/>
</dbReference>
<dbReference type="Pfam" id="PF07654">
    <property type="entry name" value="C1-set"/>
    <property type="match status" value="1"/>
</dbReference>
<dbReference type="SMART" id="SM00407">
    <property type="entry name" value="IGc1"/>
    <property type="match status" value="1"/>
</dbReference>
<dbReference type="SUPFAM" id="SSF48726">
    <property type="entry name" value="Immunoglobulin"/>
    <property type="match status" value="1"/>
</dbReference>
<dbReference type="PROSITE" id="PS50835">
    <property type="entry name" value="IG_LIKE"/>
    <property type="match status" value="1"/>
</dbReference>
<dbReference type="PROSITE" id="PS00290">
    <property type="entry name" value="IG_MHC"/>
    <property type="match status" value="1"/>
</dbReference>
<organism>
    <name type="scientific">Sigmodon hispidus</name>
    <name type="common">Hispid cotton rat</name>
    <dbReference type="NCBI Taxonomy" id="42415"/>
    <lineage>
        <taxon>Eukaryota</taxon>
        <taxon>Metazoa</taxon>
        <taxon>Chordata</taxon>
        <taxon>Craniata</taxon>
        <taxon>Vertebrata</taxon>
        <taxon>Euteleostomi</taxon>
        <taxon>Mammalia</taxon>
        <taxon>Eutheria</taxon>
        <taxon>Euarchontoglires</taxon>
        <taxon>Glires</taxon>
        <taxon>Rodentia</taxon>
        <taxon>Myomorpha</taxon>
        <taxon>Muroidea</taxon>
        <taxon>Cricetidae</taxon>
        <taxon>Sigmodontinae</taxon>
        <taxon>Sigmodon</taxon>
    </lineage>
</organism>
<reference key="1">
    <citation type="submission" date="2002-09" db="EMBL/GenBank/DDBJ databases">
        <title>Cotton rat major histocompatibility complex (MHC).</title>
        <authorList>
            <person name="Blanco J.C."/>
            <person name="Pletneva L.M."/>
            <person name="Prince G.A."/>
        </authorList>
    </citation>
    <scope>NUCLEOTIDE SEQUENCE [MRNA]</scope>
</reference>
<evidence type="ECO:0000250" key="1"/>
<evidence type="ECO:0000255" key="2">
    <source>
        <dbReference type="PROSITE-ProRule" id="PRU00114"/>
    </source>
</evidence>
<evidence type="ECO:0000305" key="3"/>
<protein>
    <recommendedName>
        <fullName>Beta-2-microglobulin</fullName>
    </recommendedName>
</protein>